<comment type="PTM">
    <text evidence="1">Cross-linked via an isopeptide bond to E.coli host protein DncV during infection (PubMed:36848932).</text>
</comment>
<organism>
    <name type="scientific">Enterobacteria phage T4</name>
    <name type="common">Bacteriophage T4</name>
    <dbReference type="NCBI Taxonomy" id="10665"/>
    <lineage>
        <taxon>Viruses</taxon>
        <taxon>Duplodnaviria</taxon>
        <taxon>Heunggongvirae</taxon>
        <taxon>Uroviricota</taxon>
        <taxon>Caudoviricetes</taxon>
        <taxon>Straboviridae</taxon>
        <taxon>Tevenvirinae</taxon>
        <taxon>Tequatrovirus</taxon>
    </lineage>
</organism>
<reference key="1">
    <citation type="journal article" date="2003" name="Microbiol. Mol. Biol. Rev.">
        <title>Bacteriophage T4 genome.</title>
        <authorList>
            <person name="Miller E.S."/>
            <person name="Kutter E."/>
            <person name="Mosig G."/>
            <person name="Arisaka F."/>
            <person name="Kunisawa T."/>
            <person name="Ruger W."/>
        </authorList>
    </citation>
    <scope>NUCLEOTIDE SEQUENCE [LARGE SCALE GENOMIC DNA]</scope>
</reference>
<reference key="2">
    <citation type="journal article" date="1987" name="Mol. Gen. Genet.">
        <title>The bacteriophage T4 dexA gene: sequence and analysis of a gene conditionally required for DNA replication.</title>
        <authorList>
            <person name="Gauss P."/>
            <person name="Gayle M."/>
            <person name="Winter R.B."/>
            <person name="Gold L."/>
        </authorList>
    </citation>
    <scope>NUCLEOTIDE SEQUENCE [GENOMIC DNA] OF 52-81</scope>
</reference>
<reference key="3">
    <citation type="journal article" date="2023" name="Nature">
        <title>Ubiquitin-like conjugation by bacterial cGAS enhances anti-phage defence.</title>
        <authorList>
            <person name="Jenson J.M."/>
            <person name="Li T."/>
            <person name="Du F."/>
            <person name="Ea C.K."/>
            <person name="Chen Z.J."/>
        </authorList>
    </citation>
    <scope>CROSS-LINK TO HOST DNCV</scope>
</reference>
<organismHost>
    <name type="scientific">Escherichia coli</name>
    <dbReference type="NCBI Taxonomy" id="562"/>
</organismHost>
<sequence>MEITKDQFYLLQDKVSEIYEIAYSKNRETVKIESSKLMLQLEEIERDLIALEFFCGEVKTVTINDYVLGEISYLYEAIIND</sequence>
<proteinExistence type="evidence at protein level"/>
<evidence type="ECO:0000269" key="1">
    <source>
    </source>
</evidence>
<dbReference type="EMBL" id="AF158101">
    <property type="protein sequence ID" value="AAD42566.1"/>
    <property type="molecule type" value="Genomic_DNA"/>
</dbReference>
<dbReference type="EMBL" id="X04834">
    <property type="protein sequence ID" value="CAA28537.1"/>
    <property type="status" value="ALT_SEQ"/>
    <property type="molecule type" value="Genomic_DNA"/>
</dbReference>
<dbReference type="PIR" id="C32338">
    <property type="entry name" value="C32338"/>
</dbReference>
<dbReference type="PIR" id="JS0543">
    <property type="entry name" value="JS0543"/>
</dbReference>
<dbReference type="RefSeq" id="NP_049631.1">
    <property type="nucleotide sequence ID" value="NC_000866.4"/>
</dbReference>
<dbReference type="GeneID" id="1258616"/>
<dbReference type="KEGG" id="vg:1258616"/>
<dbReference type="OrthoDB" id="20599at10239"/>
<dbReference type="Proteomes" id="UP000009087">
    <property type="component" value="Segment"/>
</dbReference>
<name>Y00H_BPT4</name>
<protein>
    <recommendedName>
        <fullName>Uncharacterized 9.5 kDa protein in dexA-dda intergenic region</fullName>
    </recommendedName>
</protein>
<accession>P39418</accession>
<keyword id="KW-1017">Isopeptide bond</keyword>
<keyword id="KW-1185">Reference proteome</keyword>
<feature type="chain" id="PRO_0000165083" description="Uncharacterized 9.5 kDa protein in dexA-dda intergenic region">
    <location>
        <begin position="1"/>
        <end position="81"/>
    </location>
</feature>
<feature type="cross-link" description="Glycyl lysine isopeptide (Lys-Gly) (interchain with G-Cter in host protein DncV)" evidence="1">
    <location>
        <position position="5"/>
    </location>
</feature>
<gene>
    <name type="primary">y00H</name>
    <name type="synonym">dexA.2</name>
</gene>